<feature type="chain" id="PRO_1000215810" description="3-octaprenyl-4-hydroxybenzoate carboxy-lyase">
    <location>
        <begin position="1"/>
        <end position="488"/>
    </location>
</feature>
<feature type="active site" description="Proton donor" evidence="1">
    <location>
        <position position="287"/>
    </location>
</feature>
<feature type="binding site" evidence="1">
    <location>
        <position position="172"/>
    </location>
    <ligand>
        <name>Mn(2+)</name>
        <dbReference type="ChEBI" id="CHEBI:29035"/>
    </ligand>
</feature>
<feature type="binding site" evidence="1">
    <location>
        <begin position="175"/>
        <end position="177"/>
    </location>
    <ligand>
        <name>prenylated FMN</name>
        <dbReference type="ChEBI" id="CHEBI:87746"/>
    </ligand>
</feature>
<feature type="binding site" evidence="1">
    <location>
        <begin position="189"/>
        <end position="191"/>
    </location>
    <ligand>
        <name>prenylated FMN</name>
        <dbReference type="ChEBI" id="CHEBI:87746"/>
    </ligand>
</feature>
<feature type="binding site" evidence="1">
    <location>
        <begin position="194"/>
        <end position="195"/>
    </location>
    <ligand>
        <name>prenylated FMN</name>
        <dbReference type="ChEBI" id="CHEBI:87746"/>
    </ligand>
</feature>
<feature type="binding site" evidence="1">
    <location>
        <position position="238"/>
    </location>
    <ligand>
        <name>Mn(2+)</name>
        <dbReference type="ChEBI" id="CHEBI:29035"/>
    </ligand>
</feature>
<dbReference type="EC" id="4.1.1.98" evidence="1"/>
<dbReference type="EMBL" id="AM181176">
    <property type="protein sequence ID" value="CAY53365.1"/>
    <property type="molecule type" value="Genomic_DNA"/>
</dbReference>
<dbReference type="RefSeq" id="WP_015886458.1">
    <property type="nucleotide sequence ID" value="NC_012660.1"/>
</dbReference>
<dbReference type="SMR" id="C3K3Y8"/>
<dbReference type="STRING" id="294.SRM1_05595"/>
<dbReference type="PATRIC" id="fig|216595.4.peg.6018"/>
<dbReference type="eggNOG" id="COG0043">
    <property type="taxonomic scope" value="Bacteria"/>
</dbReference>
<dbReference type="HOGENOM" id="CLU_023348_4_1_6"/>
<dbReference type="OrthoDB" id="9809841at2"/>
<dbReference type="UniPathway" id="UPA00232"/>
<dbReference type="GO" id="GO:0005829">
    <property type="term" value="C:cytosol"/>
    <property type="evidence" value="ECO:0007669"/>
    <property type="project" value="TreeGrafter"/>
</dbReference>
<dbReference type="GO" id="GO:0005886">
    <property type="term" value="C:plasma membrane"/>
    <property type="evidence" value="ECO:0007669"/>
    <property type="project" value="UniProtKB-SubCell"/>
</dbReference>
<dbReference type="GO" id="GO:0008694">
    <property type="term" value="F:3-octaprenyl-4-hydroxybenzoate carboxy-lyase activity"/>
    <property type="evidence" value="ECO:0007669"/>
    <property type="project" value="UniProtKB-UniRule"/>
</dbReference>
<dbReference type="GO" id="GO:0046872">
    <property type="term" value="F:metal ion binding"/>
    <property type="evidence" value="ECO:0007669"/>
    <property type="project" value="UniProtKB-KW"/>
</dbReference>
<dbReference type="GO" id="GO:0006744">
    <property type="term" value="P:ubiquinone biosynthetic process"/>
    <property type="evidence" value="ECO:0007669"/>
    <property type="project" value="UniProtKB-UniRule"/>
</dbReference>
<dbReference type="FunFam" id="1.20.5.570:FF:000001">
    <property type="entry name" value="3-octaprenyl-4-hydroxybenzoate carboxy-lyase"/>
    <property type="match status" value="1"/>
</dbReference>
<dbReference type="FunFam" id="3.40.1670.10:FF:000001">
    <property type="entry name" value="3-octaprenyl-4-hydroxybenzoate carboxy-lyase"/>
    <property type="match status" value="1"/>
</dbReference>
<dbReference type="Gene3D" id="1.20.5.570">
    <property type="entry name" value="Single helix bin"/>
    <property type="match status" value="1"/>
</dbReference>
<dbReference type="Gene3D" id="3.40.1670.10">
    <property type="entry name" value="UbiD C-terminal domain-like"/>
    <property type="match status" value="1"/>
</dbReference>
<dbReference type="HAMAP" id="MF_01636">
    <property type="entry name" value="UbiD"/>
    <property type="match status" value="1"/>
</dbReference>
<dbReference type="InterPro" id="IPR002830">
    <property type="entry name" value="UbiD"/>
</dbReference>
<dbReference type="InterPro" id="IPR049381">
    <property type="entry name" value="UbiD-like_C"/>
</dbReference>
<dbReference type="InterPro" id="IPR049383">
    <property type="entry name" value="UbiD-like_N"/>
</dbReference>
<dbReference type="InterPro" id="IPR023677">
    <property type="entry name" value="UbiD_bacteria"/>
</dbReference>
<dbReference type="InterPro" id="IPR048304">
    <property type="entry name" value="UbiD_Rift_dom"/>
</dbReference>
<dbReference type="NCBIfam" id="NF008175">
    <property type="entry name" value="PRK10922.1"/>
    <property type="match status" value="1"/>
</dbReference>
<dbReference type="NCBIfam" id="TIGR00148">
    <property type="entry name" value="UbiD family decarboxylase"/>
    <property type="match status" value="1"/>
</dbReference>
<dbReference type="PANTHER" id="PTHR30108">
    <property type="entry name" value="3-OCTAPRENYL-4-HYDROXYBENZOATE CARBOXY-LYASE-RELATED"/>
    <property type="match status" value="1"/>
</dbReference>
<dbReference type="PANTHER" id="PTHR30108:SF17">
    <property type="entry name" value="FERULIC ACID DECARBOXYLASE 1"/>
    <property type="match status" value="1"/>
</dbReference>
<dbReference type="Pfam" id="PF01977">
    <property type="entry name" value="UbiD"/>
    <property type="match status" value="1"/>
</dbReference>
<dbReference type="Pfam" id="PF20696">
    <property type="entry name" value="UbiD_C"/>
    <property type="match status" value="1"/>
</dbReference>
<dbReference type="Pfam" id="PF20695">
    <property type="entry name" value="UbiD_N"/>
    <property type="match status" value="1"/>
</dbReference>
<dbReference type="SUPFAM" id="SSF50475">
    <property type="entry name" value="FMN-binding split barrel"/>
    <property type="match status" value="1"/>
</dbReference>
<dbReference type="SUPFAM" id="SSF143968">
    <property type="entry name" value="UbiD C-terminal domain-like"/>
    <property type="match status" value="1"/>
</dbReference>
<comment type="function">
    <text evidence="1">Catalyzes the decarboxylation of 3-octaprenyl-4-hydroxy benzoate to 2-octaprenylphenol, an intermediate step in ubiquinone biosynthesis.</text>
</comment>
<comment type="catalytic activity">
    <reaction evidence="1">
        <text>a 4-hydroxy-3-(all-trans-polyprenyl)benzoate + H(+) = a 2-(all-trans-polyprenyl)phenol + CO2</text>
        <dbReference type="Rhea" id="RHEA:41680"/>
        <dbReference type="Rhea" id="RHEA-COMP:9514"/>
        <dbReference type="Rhea" id="RHEA-COMP:9516"/>
        <dbReference type="ChEBI" id="CHEBI:1269"/>
        <dbReference type="ChEBI" id="CHEBI:15378"/>
        <dbReference type="ChEBI" id="CHEBI:16526"/>
        <dbReference type="ChEBI" id="CHEBI:78396"/>
        <dbReference type="EC" id="4.1.1.98"/>
    </reaction>
</comment>
<comment type="cofactor">
    <cofactor evidence="1">
        <name>prenylated FMN</name>
        <dbReference type="ChEBI" id="CHEBI:87746"/>
    </cofactor>
    <text evidence="1">Binds 1 prenylated FMN per subunit.</text>
</comment>
<comment type="cofactor">
    <cofactor evidence="1">
        <name>Mn(2+)</name>
        <dbReference type="ChEBI" id="CHEBI:29035"/>
    </cofactor>
</comment>
<comment type="pathway">
    <text evidence="1">Cofactor biosynthesis; ubiquinone biosynthesis.</text>
</comment>
<comment type="subunit">
    <text evidence="1">Homohexamer.</text>
</comment>
<comment type="subcellular location">
    <subcellularLocation>
        <location evidence="1">Cell membrane</location>
        <topology evidence="1">Peripheral membrane protein</topology>
    </subcellularLocation>
</comment>
<comment type="similarity">
    <text evidence="1">Belongs to the UbiD family.</text>
</comment>
<accession>C3K3Y8</accession>
<protein>
    <recommendedName>
        <fullName evidence="1">3-octaprenyl-4-hydroxybenzoate carboxy-lyase</fullName>
        <ecNumber evidence="1">4.1.1.98</ecNumber>
    </recommendedName>
    <alternativeName>
        <fullName evidence="1">Polyprenyl p-hydroxybenzoate decarboxylase</fullName>
    </alternativeName>
</protein>
<sequence length="488" mass="54732">MKFKDLRDFVQQLEQRGELKRIQMPISPVLEMTEICDRTLRNKGPALLFENPTGFDIPVLGNLFGTPERVAFGMGAESVSELREIGKLLAFLKEPEPPKGLKDAWSKLPIFRKIIAMAPKVVKDAVCQEVVIEGEDVDLAMLPVQTCWPGDVGPLITWGLTVTKGPNKDRQNLGIYRQQVIGRNKVIMRWLSHRGGALDFREWCEKHPGKPFPVSVALGADPATILGAVTPVPDSLSEYAFAGLLRGNRTELVKCRGNDLQVPATAEIILEGVIHPGEMADEGPYGDHTGYYNEVDSFPVFTVERITHRIKPIYHSTYTGRPPDEPAILGVALNEVFVPILQKQFPEITDFYLPPEGCSYRMAIVTMKKSYPGHAKRVMLGVWSFLRQFMYTKFVIVTDDDINARDWNDVIWAITTRMDPKRDTVMIDNTPIDYLDFASPVSGLGSKMGLDATHKWPGETTREWGRVIVKDEAVTARVDAIWKELGID</sequence>
<name>UBID_PSEFS</name>
<proteinExistence type="inferred from homology"/>
<organism>
    <name type="scientific">Pseudomonas fluorescens (strain SBW25)</name>
    <dbReference type="NCBI Taxonomy" id="216595"/>
    <lineage>
        <taxon>Bacteria</taxon>
        <taxon>Pseudomonadati</taxon>
        <taxon>Pseudomonadota</taxon>
        <taxon>Gammaproteobacteria</taxon>
        <taxon>Pseudomonadales</taxon>
        <taxon>Pseudomonadaceae</taxon>
        <taxon>Pseudomonas</taxon>
    </lineage>
</organism>
<gene>
    <name evidence="1" type="primary">ubiD</name>
    <name type="ordered locus">PFLU_5898</name>
</gene>
<reference key="1">
    <citation type="journal article" date="2009" name="Genome Biol.">
        <title>Genomic and genetic analyses of diversity and plant interactions of Pseudomonas fluorescens.</title>
        <authorList>
            <person name="Silby M.W."/>
            <person name="Cerdeno-Tarraga A.M."/>
            <person name="Vernikos G.S."/>
            <person name="Giddens S.R."/>
            <person name="Jackson R.W."/>
            <person name="Preston G.M."/>
            <person name="Zhang X.-X."/>
            <person name="Moon C.D."/>
            <person name="Gehrig S.M."/>
            <person name="Godfrey S.A.C."/>
            <person name="Knight C.G."/>
            <person name="Malone J.G."/>
            <person name="Robinson Z."/>
            <person name="Spiers A.J."/>
            <person name="Harris S."/>
            <person name="Challis G.L."/>
            <person name="Yaxley A.M."/>
            <person name="Harris D."/>
            <person name="Seeger K."/>
            <person name="Murphy L."/>
            <person name="Rutter S."/>
            <person name="Squares R."/>
            <person name="Quail M.A."/>
            <person name="Saunders E."/>
            <person name="Mavromatis K."/>
            <person name="Brettin T.S."/>
            <person name="Bentley S.D."/>
            <person name="Hothersall J."/>
            <person name="Stephens E."/>
            <person name="Thomas C.M."/>
            <person name="Parkhill J."/>
            <person name="Levy S.B."/>
            <person name="Rainey P.B."/>
            <person name="Thomson N.R."/>
        </authorList>
    </citation>
    <scope>NUCLEOTIDE SEQUENCE [LARGE SCALE GENOMIC DNA]</scope>
    <source>
        <strain>SBW25</strain>
    </source>
</reference>
<evidence type="ECO:0000255" key="1">
    <source>
        <dbReference type="HAMAP-Rule" id="MF_01636"/>
    </source>
</evidence>
<keyword id="KW-1003">Cell membrane</keyword>
<keyword id="KW-0210">Decarboxylase</keyword>
<keyword id="KW-0285">Flavoprotein</keyword>
<keyword id="KW-0288">FMN</keyword>
<keyword id="KW-0456">Lyase</keyword>
<keyword id="KW-0464">Manganese</keyword>
<keyword id="KW-0472">Membrane</keyword>
<keyword id="KW-0479">Metal-binding</keyword>
<keyword id="KW-0831">Ubiquinone biosynthesis</keyword>